<comment type="function">
    <text evidence="2">Component of the ubiquinol-cytochrome c reductase complex (complex III or cytochrome b-c1 complex) that is part of the mitochondrial respiratory chain. The b-c1 complex mediates electron transfer from ubiquinol to cytochrome c. Contributes to the generation of a proton gradient across the mitochondrial membrane that is then used for ATP synthesis.</text>
</comment>
<comment type="cofactor">
    <cofactor evidence="2">
        <name>heme b</name>
        <dbReference type="ChEBI" id="CHEBI:60344"/>
    </cofactor>
    <text evidence="2">Binds 2 heme b groups non-covalently.</text>
</comment>
<comment type="subunit">
    <text evidence="2">The cytochrome bc1 complex contains 11 subunits: 3 respiratory subunits (MT-CYB, CYC1 and UQCRFS1), 2 core proteins (UQCRC1 and UQCRC2) and 6 low-molecular weight proteins (UQCRH/QCR6, UQCRB/QCR7, UQCRQ/QCR8, UQCR10/QCR9, UQCR11/QCR10 and a cleavage product of UQCRFS1). This cytochrome bc1 complex then forms a dimer.</text>
</comment>
<comment type="subcellular location">
    <subcellularLocation>
        <location evidence="2">Mitochondrion inner membrane</location>
        <topology evidence="2">Multi-pass membrane protein</topology>
    </subcellularLocation>
</comment>
<comment type="miscellaneous">
    <text evidence="1">Heme 1 (or BL or b562) is low-potential and absorbs at about 562 nm, and heme 2 (or BH or b566) is high-potential and absorbs at about 566 nm.</text>
</comment>
<comment type="similarity">
    <text evidence="3 4">Belongs to the cytochrome b family.</text>
</comment>
<comment type="caution">
    <text evidence="2">The full-length protein contains only eight transmembrane helices, not nine as predicted by bioinformatics tools.</text>
</comment>
<protein>
    <recommendedName>
        <fullName>Cytochrome b</fullName>
    </recommendedName>
    <alternativeName>
        <fullName>Complex III subunit 3</fullName>
    </alternativeName>
    <alternativeName>
        <fullName>Complex III subunit III</fullName>
    </alternativeName>
    <alternativeName>
        <fullName>Cytochrome b-c1 complex subunit 3</fullName>
    </alternativeName>
    <alternativeName>
        <fullName>Ubiquinol-cytochrome-c reductase complex cytochrome b subunit</fullName>
    </alternativeName>
</protein>
<name>CYB_MINFU</name>
<geneLocation type="mitochondrion"/>
<keyword id="KW-0249">Electron transport</keyword>
<keyword id="KW-0349">Heme</keyword>
<keyword id="KW-0408">Iron</keyword>
<keyword id="KW-0472">Membrane</keyword>
<keyword id="KW-0479">Metal-binding</keyword>
<keyword id="KW-0496">Mitochondrion</keyword>
<keyword id="KW-0999">Mitochondrion inner membrane</keyword>
<keyword id="KW-0679">Respiratory chain</keyword>
<keyword id="KW-0812">Transmembrane</keyword>
<keyword id="KW-1133">Transmembrane helix</keyword>
<keyword id="KW-0813">Transport</keyword>
<keyword id="KW-0830">Ubiquinone</keyword>
<dbReference type="EMBL" id="AB085735">
    <property type="protein sequence ID" value="BAC16629.1"/>
    <property type="molecule type" value="Genomic_DNA"/>
</dbReference>
<dbReference type="SMR" id="Q8HQE9"/>
<dbReference type="GO" id="GO:0005743">
    <property type="term" value="C:mitochondrial inner membrane"/>
    <property type="evidence" value="ECO:0007669"/>
    <property type="project" value="UniProtKB-SubCell"/>
</dbReference>
<dbReference type="GO" id="GO:0045275">
    <property type="term" value="C:respiratory chain complex III"/>
    <property type="evidence" value="ECO:0007669"/>
    <property type="project" value="InterPro"/>
</dbReference>
<dbReference type="GO" id="GO:0046872">
    <property type="term" value="F:metal ion binding"/>
    <property type="evidence" value="ECO:0007669"/>
    <property type="project" value="UniProtKB-KW"/>
</dbReference>
<dbReference type="GO" id="GO:0008121">
    <property type="term" value="F:ubiquinol-cytochrome-c reductase activity"/>
    <property type="evidence" value="ECO:0007669"/>
    <property type="project" value="InterPro"/>
</dbReference>
<dbReference type="GO" id="GO:0006122">
    <property type="term" value="P:mitochondrial electron transport, ubiquinol to cytochrome c"/>
    <property type="evidence" value="ECO:0007669"/>
    <property type="project" value="TreeGrafter"/>
</dbReference>
<dbReference type="CDD" id="cd00290">
    <property type="entry name" value="cytochrome_b_C"/>
    <property type="match status" value="1"/>
</dbReference>
<dbReference type="CDD" id="cd00284">
    <property type="entry name" value="Cytochrome_b_N"/>
    <property type="match status" value="1"/>
</dbReference>
<dbReference type="FunFam" id="1.20.810.10:FF:000002">
    <property type="entry name" value="Cytochrome b"/>
    <property type="match status" value="1"/>
</dbReference>
<dbReference type="Gene3D" id="1.20.810.10">
    <property type="entry name" value="Cytochrome Bc1 Complex, Chain C"/>
    <property type="match status" value="1"/>
</dbReference>
<dbReference type="InterPro" id="IPR005798">
    <property type="entry name" value="Cyt_b/b6_C"/>
</dbReference>
<dbReference type="InterPro" id="IPR036150">
    <property type="entry name" value="Cyt_b/b6_C_sf"/>
</dbReference>
<dbReference type="InterPro" id="IPR005797">
    <property type="entry name" value="Cyt_b/b6_N"/>
</dbReference>
<dbReference type="InterPro" id="IPR027387">
    <property type="entry name" value="Cytb/b6-like_sf"/>
</dbReference>
<dbReference type="InterPro" id="IPR030689">
    <property type="entry name" value="Cytochrome_b"/>
</dbReference>
<dbReference type="InterPro" id="IPR048260">
    <property type="entry name" value="Cytochrome_b_C_euk/bac"/>
</dbReference>
<dbReference type="InterPro" id="IPR048259">
    <property type="entry name" value="Cytochrome_b_N_euk/bac"/>
</dbReference>
<dbReference type="InterPro" id="IPR016174">
    <property type="entry name" value="Di-haem_cyt_TM"/>
</dbReference>
<dbReference type="PANTHER" id="PTHR19271">
    <property type="entry name" value="CYTOCHROME B"/>
    <property type="match status" value="1"/>
</dbReference>
<dbReference type="PANTHER" id="PTHR19271:SF16">
    <property type="entry name" value="CYTOCHROME B"/>
    <property type="match status" value="1"/>
</dbReference>
<dbReference type="Pfam" id="PF00032">
    <property type="entry name" value="Cytochrom_B_C"/>
    <property type="match status" value="1"/>
</dbReference>
<dbReference type="Pfam" id="PF00033">
    <property type="entry name" value="Cytochrome_B"/>
    <property type="match status" value="1"/>
</dbReference>
<dbReference type="PIRSF" id="PIRSF038885">
    <property type="entry name" value="COB"/>
    <property type="match status" value="1"/>
</dbReference>
<dbReference type="SUPFAM" id="SSF81648">
    <property type="entry name" value="a domain/subunit of cytochrome bc1 complex (Ubiquinol-cytochrome c reductase)"/>
    <property type="match status" value="1"/>
</dbReference>
<dbReference type="SUPFAM" id="SSF81342">
    <property type="entry name" value="Transmembrane di-heme cytochromes"/>
    <property type="match status" value="1"/>
</dbReference>
<dbReference type="PROSITE" id="PS51003">
    <property type="entry name" value="CYTB_CTER"/>
    <property type="match status" value="1"/>
</dbReference>
<dbReference type="PROSITE" id="PS51002">
    <property type="entry name" value="CYTB_NTER"/>
    <property type="match status" value="1"/>
</dbReference>
<sequence>MTNIRKSHPLIKIVNSSLVDLPAPSNISSWWNFGSLLGVCLGIQILTGLFLAMHYTADTATAFNSVTHICRDVNYGWILRYLHANGASMFFICLYLHVGRGLYYGSYTLTETWNIGILLLFAVMATAFMGYVLPWGQMSFWGATVITNLLSAIPYVGTDLVEWIWGGFSVDKATLTRFFAFHFLLPFIIAAMVMVHLLFLHETGSNNPTGIPSDMDAIPFHPYYTIKDALGFLVMIMMLLTLVLFSPDLLGDPDNYTPANPLNTPPHIKPEWYFLFAYAILRSIPNKLGGVLALVLSILVLAIVPLLHTSKQRSMTFRPISQCLFWLLVANLLTLTWIGGQPVEHPYIIIGQLASILYFMIILVLMPLISIMENHLLKW</sequence>
<feature type="chain" id="PRO_0000061192" description="Cytochrome b">
    <location>
        <begin position="1"/>
        <end position="379"/>
    </location>
</feature>
<feature type="transmembrane region" description="Helical" evidence="2">
    <location>
        <begin position="33"/>
        <end position="53"/>
    </location>
</feature>
<feature type="transmembrane region" description="Helical" evidence="2">
    <location>
        <begin position="77"/>
        <end position="98"/>
    </location>
</feature>
<feature type="transmembrane region" description="Helical" evidence="2">
    <location>
        <begin position="113"/>
        <end position="133"/>
    </location>
</feature>
<feature type="transmembrane region" description="Helical" evidence="2">
    <location>
        <begin position="178"/>
        <end position="198"/>
    </location>
</feature>
<feature type="transmembrane region" description="Helical" evidence="2">
    <location>
        <begin position="226"/>
        <end position="246"/>
    </location>
</feature>
<feature type="transmembrane region" description="Helical" evidence="2">
    <location>
        <begin position="288"/>
        <end position="308"/>
    </location>
</feature>
<feature type="transmembrane region" description="Helical" evidence="2">
    <location>
        <begin position="320"/>
        <end position="340"/>
    </location>
</feature>
<feature type="transmembrane region" description="Helical" evidence="2">
    <location>
        <begin position="347"/>
        <end position="367"/>
    </location>
</feature>
<feature type="binding site" description="axial binding residue" evidence="2">
    <location>
        <position position="83"/>
    </location>
    <ligand>
        <name>heme b</name>
        <dbReference type="ChEBI" id="CHEBI:60344"/>
        <label>b562</label>
    </ligand>
    <ligandPart>
        <name>Fe</name>
        <dbReference type="ChEBI" id="CHEBI:18248"/>
    </ligandPart>
</feature>
<feature type="binding site" description="axial binding residue" evidence="2">
    <location>
        <position position="97"/>
    </location>
    <ligand>
        <name>heme b</name>
        <dbReference type="ChEBI" id="CHEBI:60344"/>
        <label>b566</label>
    </ligand>
    <ligandPart>
        <name>Fe</name>
        <dbReference type="ChEBI" id="CHEBI:18248"/>
    </ligandPart>
</feature>
<feature type="binding site" description="axial binding residue" evidence="2">
    <location>
        <position position="182"/>
    </location>
    <ligand>
        <name>heme b</name>
        <dbReference type="ChEBI" id="CHEBI:60344"/>
        <label>b562</label>
    </ligand>
    <ligandPart>
        <name>Fe</name>
        <dbReference type="ChEBI" id="CHEBI:18248"/>
    </ligandPart>
</feature>
<feature type="binding site" description="axial binding residue" evidence="2">
    <location>
        <position position="196"/>
    </location>
    <ligand>
        <name>heme b</name>
        <dbReference type="ChEBI" id="CHEBI:60344"/>
        <label>b566</label>
    </ligand>
    <ligandPart>
        <name>Fe</name>
        <dbReference type="ChEBI" id="CHEBI:18248"/>
    </ligandPart>
</feature>
<feature type="binding site" evidence="2">
    <location>
        <position position="201"/>
    </location>
    <ligand>
        <name>a ubiquinone</name>
        <dbReference type="ChEBI" id="CHEBI:16389"/>
    </ligand>
</feature>
<proteinExistence type="inferred from homology"/>
<gene>
    <name type="primary">MT-CYB</name>
    <name type="synonym">COB</name>
    <name type="synonym">CYTB</name>
    <name type="synonym">MTCYB</name>
</gene>
<organism>
    <name type="scientific">Miniopterus fuliginosus</name>
    <name type="common">Japanese long-fingered bat</name>
    <name type="synonym">Miniopterus schreibersii fuliginosus</name>
    <dbReference type="NCBI Taxonomy" id="187007"/>
    <lineage>
        <taxon>Eukaryota</taxon>
        <taxon>Metazoa</taxon>
        <taxon>Chordata</taxon>
        <taxon>Craniata</taxon>
        <taxon>Vertebrata</taxon>
        <taxon>Euteleostomi</taxon>
        <taxon>Mammalia</taxon>
        <taxon>Eutheria</taxon>
        <taxon>Laurasiatheria</taxon>
        <taxon>Chiroptera</taxon>
        <taxon>Yangochiroptera</taxon>
        <taxon>Miniopteridae</taxon>
        <taxon>Miniopterus</taxon>
    </lineage>
</organism>
<accession>Q8HQE9</accession>
<reference key="1">
    <citation type="journal article" date="2003" name="Genes Genet. Syst.">
        <title>Molecular phylogeny of Japanese Rhinolophidae based on variations in the complete sequence of the mitochondrial cytochrome b gene.</title>
        <authorList>
            <person name="Sakai T."/>
            <person name="Kikkawa Y."/>
            <person name="Tuchiya K."/>
            <person name="Harada M."/>
            <person name="Kanoe M."/>
            <person name="Yoshiyuki M."/>
            <person name="Yonekawa H."/>
        </authorList>
    </citation>
    <scope>NUCLEOTIDE SEQUENCE [GENOMIC DNA]</scope>
</reference>
<evidence type="ECO:0000250" key="1"/>
<evidence type="ECO:0000250" key="2">
    <source>
        <dbReference type="UniProtKB" id="P00157"/>
    </source>
</evidence>
<evidence type="ECO:0000255" key="3">
    <source>
        <dbReference type="PROSITE-ProRule" id="PRU00967"/>
    </source>
</evidence>
<evidence type="ECO:0000255" key="4">
    <source>
        <dbReference type="PROSITE-ProRule" id="PRU00968"/>
    </source>
</evidence>